<comment type="function">
    <text evidence="1">Catalyzes the attachment of tyrosine to tRNA(Tyr) in a two-step reaction: tyrosine is first activated by ATP to form Tyr-AMP and then transferred to the acceptor end of tRNA(Tyr).</text>
</comment>
<comment type="catalytic activity">
    <reaction evidence="1">
        <text>tRNA(Tyr) + L-tyrosine + ATP = L-tyrosyl-tRNA(Tyr) + AMP + diphosphate + H(+)</text>
        <dbReference type="Rhea" id="RHEA:10220"/>
        <dbReference type="Rhea" id="RHEA-COMP:9706"/>
        <dbReference type="Rhea" id="RHEA-COMP:9707"/>
        <dbReference type="ChEBI" id="CHEBI:15378"/>
        <dbReference type="ChEBI" id="CHEBI:30616"/>
        <dbReference type="ChEBI" id="CHEBI:33019"/>
        <dbReference type="ChEBI" id="CHEBI:58315"/>
        <dbReference type="ChEBI" id="CHEBI:78442"/>
        <dbReference type="ChEBI" id="CHEBI:78536"/>
        <dbReference type="ChEBI" id="CHEBI:456215"/>
        <dbReference type="EC" id="6.1.1.1"/>
    </reaction>
</comment>
<comment type="subunit">
    <text evidence="1">Homodimer.</text>
</comment>
<comment type="subcellular location">
    <subcellularLocation>
        <location evidence="1">Cytoplasm</location>
    </subcellularLocation>
</comment>
<comment type="similarity">
    <text evidence="1">Belongs to the class-I aminoacyl-tRNA synthetase family. TyrS type 2 subfamily.</text>
</comment>
<accession>Q83EX7</accession>
<gene>
    <name evidence="1" type="primary">tyrS</name>
    <name type="ordered locus">CBU_0181</name>
</gene>
<protein>
    <recommendedName>
        <fullName evidence="1">Tyrosine--tRNA ligase</fullName>
        <ecNumber evidence="1">6.1.1.1</ecNumber>
    </recommendedName>
    <alternativeName>
        <fullName evidence="1">Tyrosyl-tRNA synthetase</fullName>
        <shortName evidence="1">TyrRS</shortName>
    </alternativeName>
</protein>
<name>SYY_COXBU</name>
<dbReference type="EC" id="6.1.1.1" evidence="1"/>
<dbReference type="EMBL" id="AE016828">
    <property type="protein sequence ID" value="AAO89741.1"/>
    <property type="molecule type" value="Genomic_DNA"/>
</dbReference>
<dbReference type="RefSeq" id="NP_819227.1">
    <property type="nucleotide sequence ID" value="NC_002971.4"/>
</dbReference>
<dbReference type="RefSeq" id="WP_010957422.1">
    <property type="nucleotide sequence ID" value="NC_002971.4"/>
</dbReference>
<dbReference type="SMR" id="Q83EX7"/>
<dbReference type="STRING" id="227377.CBU_0181"/>
<dbReference type="DNASU" id="1208053"/>
<dbReference type="EnsemblBacteria" id="AAO89741">
    <property type="protein sequence ID" value="AAO89741"/>
    <property type="gene ID" value="CBU_0181"/>
</dbReference>
<dbReference type="GeneID" id="1208053"/>
<dbReference type="KEGG" id="cbu:CBU_0181"/>
<dbReference type="PATRIC" id="fig|227377.7.peg.182"/>
<dbReference type="eggNOG" id="COG0162">
    <property type="taxonomic scope" value="Bacteria"/>
</dbReference>
<dbReference type="HOGENOM" id="CLU_024003_5_0_6"/>
<dbReference type="OrthoDB" id="9804243at2"/>
<dbReference type="Proteomes" id="UP000002671">
    <property type="component" value="Chromosome"/>
</dbReference>
<dbReference type="GO" id="GO:0005829">
    <property type="term" value="C:cytosol"/>
    <property type="evidence" value="ECO:0000318"/>
    <property type="project" value="GO_Central"/>
</dbReference>
<dbReference type="GO" id="GO:0005524">
    <property type="term" value="F:ATP binding"/>
    <property type="evidence" value="ECO:0007669"/>
    <property type="project" value="UniProtKB-UniRule"/>
</dbReference>
<dbReference type="GO" id="GO:0003723">
    <property type="term" value="F:RNA binding"/>
    <property type="evidence" value="ECO:0007669"/>
    <property type="project" value="UniProtKB-KW"/>
</dbReference>
<dbReference type="GO" id="GO:0004831">
    <property type="term" value="F:tyrosine-tRNA ligase activity"/>
    <property type="evidence" value="ECO:0000318"/>
    <property type="project" value="GO_Central"/>
</dbReference>
<dbReference type="GO" id="GO:0043039">
    <property type="term" value="P:tRNA aminoacylation"/>
    <property type="evidence" value="ECO:0000318"/>
    <property type="project" value="GO_Central"/>
</dbReference>
<dbReference type="GO" id="GO:0006437">
    <property type="term" value="P:tyrosyl-tRNA aminoacylation"/>
    <property type="evidence" value="ECO:0007669"/>
    <property type="project" value="UniProtKB-UniRule"/>
</dbReference>
<dbReference type="CDD" id="cd00165">
    <property type="entry name" value="S4"/>
    <property type="match status" value="1"/>
</dbReference>
<dbReference type="CDD" id="cd00805">
    <property type="entry name" value="TyrRS_core"/>
    <property type="match status" value="1"/>
</dbReference>
<dbReference type="FunFam" id="1.10.240.10:FF:000006">
    <property type="entry name" value="Tyrosine--tRNA ligase"/>
    <property type="match status" value="1"/>
</dbReference>
<dbReference type="FunFam" id="3.10.290.10:FF:000022">
    <property type="entry name" value="Tyrosine--tRNA ligase"/>
    <property type="match status" value="1"/>
</dbReference>
<dbReference type="FunFam" id="3.40.50.620:FF:000061">
    <property type="entry name" value="Tyrosine--tRNA ligase"/>
    <property type="match status" value="1"/>
</dbReference>
<dbReference type="Gene3D" id="3.40.50.620">
    <property type="entry name" value="HUPs"/>
    <property type="match status" value="1"/>
</dbReference>
<dbReference type="Gene3D" id="3.10.290.10">
    <property type="entry name" value="RNA-binding S4 domain"/>
    <property type="match status" value="1"/>
</dbReference>
<dbReference type="Gene3D" id="1.10.240.10">
    <property type="entry name" value="Tyrosyl-Transfer RNA Synthetase"/>
    <property type="match status" value="1"/>
</dbReference>
<dbReference type="HAMAP" id="MF_02007">
    <property type="entry name" value="Tyr_tRNA_synth_type2"/>
    <property type="match status" value="1"/>
</dbReference>
<dbReference type="InterPro" id="IPR001412">
    <property type="entry name" value="aa-tRNA-synth_I_CS"/>
</dbReference>
<dbReference type="InterPro" id="IPR002305">
    <property type="entry name" value="aa-tRNA-synth_Ic"/>
</dbReference>
<dbReference type="InterPro" id="IPR014729">
    <property type="entry name" value="Rossmann-like_a/b/a_fold"/>
</dbReference>
<dbReference type="InterPro" id="IPR002942">
    <property type="entry name" value="S4_RNA-bd"/>
</dbReference>
<dbReference type="InterPro" id="IPR036986">
    <property type="entry name" value="S4_RNA-bd_sf"/>
</dbReference>
<dbReference type="InterPro" id="IPR002307">
    <property type="entry name" value="Tyr-tRNA-ligase"/>
</dbReference>
<dbReference type="InterPro" id="IPR024088">
    <property type="entry name" value="Tyr-tRNA-ligase_bac-type"/>
</dbReference>
<dbReference type="InterPro" id="IPR024108">
    <property type="entry name" value="Tyr-tRNA-ligase_bac_2"/>
</dbReference>
<dbReference type="NCBIfam" id="TIGR00234">
    <property type="entry name" value="tyrS"/>
    <property type="match status" value="1"/>
</dbReference>
<dbReference type="PANTHER" id="PTHR11766:SF1">
    <property type="entry name" value="TYROSINE--TRNA LIGASE"/>
    <property type="match status" value="1"/>
</dbReference>
<dbReference type="PANTHER" id="PTHR11766">
    <property type="entry name" value="TYROSYL-TRNA SYNTHETASE"/>
    <property type="match status" value="1"/>
</dbReference>
<dbReference type="Pfam" id="PF01479">
    <property type="entry name" value="S4"/>
    <property type="match status" value="1"/>
</dbReference>
<dbReference type="Pfam" id="PF00579">
    <property type="entry name" value="tRNA-synt_1b"/>
    <property type="match status" value="1"/>
</dbReference>
<dbReference type="PRINTS" id="PR01040">
    <property type="entry name" value="TRNASYNTHTYR"/>
</dbReference>
<dbReference type="SMART" id="SM00363">
    <property type="entry name" value="S4"/>
    <property type="match status" value="1"/>
</dbReference>
<dbReference type="SUPFAM" id="SSF55174">
    <property type="entry name" value="Alpha-L RNA-binding motif"/>
    <property type="match status" value="1"/>
</dbReference>
<dbReference type="SUPFAM" id="SSF52374">
    <property type="entry name" value="Nucleotidylyl transferase"/>
    <property type="match status" value="1"/>
</dbReference>
<dbReference type="PROSITE" id="PS00178">
    <property type="entry name" value="AA_TRNA_LIGASE_I"/>
    <property type="match status" value="1"/>
</dbReference>
<dbReference type="PROSITE" id="PS50889">
    <property type="entry name" value="S4"/>
    <property type="match status" value="1"/>
</dbReference>
<sequence length="399" mass="45830">MISSQEAFEEIKRGAVEIIHEDELLSRLAEEKPLRIKLGFDPTAPDIHLGHTVVLNKLRQFQTLGHEVIFLIGDFTAMIGDPTGKNITRQPLTREIVMENTKTYETQAFRILDPDKTQVTSNSTWINKLKADDLVRLAATYTVARMLERDDFNKRYLSQQPIAIHEFLYPLLQGYDSVALKADVELGGTDQKFNLLVGRELQKHFGQRPQCVLTVPLLEGLDGIQKMSKSLNNYIGITEPPEEMFGKVMSISDELMWRYYELLSFRPMREINRWREEVSEGRNPRDIKILLAEELVTRFHSKEAATKAHQHFIDRFKRHELPTDLDEIELTAENTHLTIGYILQRAGLVNTTSEGLRMIAQGAVRIDGERVEDIKLAIPRGESHLFQVGKRRFAKVKVI</sequence>
<keyword id="KW-0030">Aminoacyl-tRNA synthetase</keyword>
<keyword id="KW-0067">ATP-binding</keyword>
<keyword id="KW-0963">Cytoplasm</keyword>
<keyword id="KW-0436">Ligase</keyword>
<keyword id="KW-0547">Nucleotide-binding</keyword>
<keyword id="KW-0648">Protein biosynthesis</keyword>
<keyword id="KW-1185">Reference proteome</keyword>
<keyword id="KW-0694">RNA-binding</keyword>
<reference key="1">
    <citation type="journal article" date="2003" name="Proc. Natl. Acad. Sci. U.S.A.">
        <title>Complete genome sequence of the Q-fever pathogen, Coxiella burnetii.</title>
        <authorList>
            <person name="Seshadri R."/>
            <person name="Paulsen I.T."/>
            <person name="Eisen J.A."/>
            <person name="Read T.D."/>
            <person name="Nelson K.E."/>
            <person name="Nelson W.C."/>
            <person name="Ward N.L."/>
            <person name="Tettelin H."/>
            <person name="Davidsen T.M."/>
            <person name="Beanan M.J."/>
            <person name="DeBoy R.T."/>
            <person name="Daugherty S.C."/>
            <person name="Brinkac L.M."/>
            <person name="Madupu R."/>
            <person name="Dodson R.J."/>
            <person name="Khouri H.M."/>
            <person name="Lee K.H."/>
            <person name="Carty H.A."/>
            <person name="Scanlan D."/>
            <person name="Heinzen R.A."/>
            <person name="Thompson H.A."/>
            <person name="Samuel J.E."/>
            <person name="Fraser C.M."/>
            <person name="Heidelberg J.F."/>
        </authorList>
    </citation>
    <scope>NUCLEOTIDE SEQUENCE [LARGE SCALE GENOMIC DNA]</scope>
    <source>
        <strain>RSA 493 / Nine Mile phase I</strain>
    </source>
</reference>
<organism>
    <name type="scientific">Coxiella burnetii (strain RSA 493 / Nine Mile phase I)</name>
    <dbReference type="NCBI Taxonomy" id="227377"/>
    <lineage>
        <taxon>Bacteria</taxon>
        <taxon>Pseudomonadati</taxon>
        <taxon>Pseudomonadota</taxon>
        <taxon>Gammaproteobacteria</taxon>
        <taxon>Legionellales</taxon>
        <taxon>Coxiellaceae</taxon>
        <taxon>Coxiella</taxon>
    </lineage>
</organism>
<proteinExistence type="inferred from homology"/>
<feature type="chain" id="PRO_0000236712" description="Tyrosine--tRNA ligase">
    <location>
        <begin position="1"/>
        <end position="399"/>
    </location>
</feature>
<feature type="domain" description="S4 RNA-binding" evidence="1">
    <location>
        <begin position="337"/>
        <end position="398"/>
    </location>
</feature>
<feature type="short sequence motif" description="'HIGH' region">
    <location>
        <begin position="42"/>
        <end position="51"/>
    </location>
</feature>
<feature type="short sequence motif" description="'KMSKS' region">
    <location>
        <begin position="226"/>
        <end position="230"/>
    </location>
</feature>
<feature type="binding site" evidence="1">
    <location>
        <position position="229"/>
    </location>
    <ligand>
        <name>ATP</name>
        <dbReference type="ChEBI" id="CHEBI:30616"/>
    </ligand>
</feature>
<evidence type="ECO:0000255" key="1">
    <source>
        <dbReference type="HAMAP-Rule" id="MF_02007"/>
    </source>
</evidence>